<proteinExistence type="predicted"/>
<name>A45_SSV1</name>
<accession>P20198</accession>
<reference key="1">
    <citation type="journal article" date="1991" name="Virology">
        <title>Complete nucleotide sequence of the virus SSV1 of the archaebacterium Sulfolobus shibatae.</title>
        <authorList>
            <person name="Palm P."/>
            <person name="Schleper C."/>
            <person name="Grampp B."/>
            <person name="Yeats S."/>
            <person name="McWilliam P."/>
            <person name="Reiter W.-D."/>
            <person name="Zillig W."/>
        </authorList>
    </citation>
    <scope>NUCLEOTIDE SEQUENCE [GENOMIC DNA]</scope>
</reference>
<keyword id="KW-0479">Metal-binding</keyword>
<keyword id="KW-1185">Reference proteome</keyword>
<keyword id="KW-0862">Zinc</keyword>
<keyword id="KW-0863">Zinc-finger</keyword>
<organism>
    <name type="scientific">Sulfolobus spindle-shape virus 1</name>
    <name type="common">SSV1</name>
    <dbReference type="NCBI Taxonomy" id="244589"/>
    <lineage>
        <taxon>Viruses</taxon>
        <taxon>Viruses incertae sedis</taxon>
        <taxon>Fuselloviridae</taxon>
        <taxon>Alphafusellovirus</taxon>
    </lineage>
</organism>
<sequence length="45" mass="5560">MYQCLRCGGIFNKRREVVEHLLVGHKHKDRLTLDFYYIYFRVRGQ</sequence>
<protein>
    <recommendedName>
        <fullName>Uncharacterized protein A-45</fullName>
    </recommendedName>
</protein>
<evidence type="ECO:0000255" key="1">
    <source>
        <dbReference type="PROSITE-ProRule" id="PRU00042"/>
    </source>
</evidence>
<feature type="chain" id="PRO_0000047833" description="Uncharacterized protein A-45">
    <location>
        <begin position="1"/>
        <end position="45"/>
    </location>
</feature>
<feature type="zinc finger region" description="C2H2-type" evidence="1">
    <location>
        <begin position="2"/>
        <end position="25"/>
    </location>
</feature>
<gene>
    <name type="ORF">a45</name>
</gene>
<organismHost>
    <name type="scientific">Saccharolobus solfataricus</name>
    <name type="common">Sulfolobus solfataricus</name>
    <dbReference type="NCBI Taxonomy" id="2287"/>
</organismHost>
<dbReference type="EMBL" id="X07234">
    <property type="protein sequence ID" value="CAA30195.1"/>
    <property type="molecule type" value="Genomic_DNA"/>
</dbReference>
<dbReference type="PIR" id="S03227">
    <property type="entry name" value="S03227"/>
</dbReference>
<dbReference type="RefSeq" id="NP_039793.1">
    <property type="nucleotide sequence ID" value="NC_001338.1"/>
</dbReference>
<dbReference type="SMR" id="P20198"/>
<dbReference type="KEGG" id="vg:2559642"/>
<dbReference type="OrthoDB" id="28276at10239"/>
<dbReference type="Proteomes" id="UP000000854">
    <property type="component" value="Genome"/>
</dbReference>
<dbReference type="GO" id="GO:0008270">
    <property type="term" value="F:zinc ion binding"/>
    <property type="evidence" value="ECO:0007669"/>
    <property type="project" value="UniProtKB-KW"/>
</dbReference>
<dbReference type="InterPro" id="IPR013087">
    <property type="entry name" value="Znf_C2H2_type"/>
</dbReference>
<dbReference type="PROSITE" id="PS00028">
    <property type="entry name" value="ZINC_FINGER_C2H2_1"/>
    <property type="match status" value="1"/>
</dbReference>
<dbReference type="PROSITE" id="PS50157">
    <property type="entry name" value="ZINC_FINGER_C2H2_2"/>
    <property type="match status" value="1"/>
</dbReference>